<comment type="function">
    <text evidence="1">Specifically dimethylates two adjacent adenosines (A1518 and A1519) in the loop of a conserved hairpin near the 3'-end of 16S rRNA in the 30S particle. May play a critical role in biogenesis of 30S subunits.</text>
</comment>
<comment type="catalytic activity">
    <reaction evidence="1">
        <text>adenosine(1518)/adenosine(1519) in 16S rRNA + 4 S-adenosyl-L-methionine = N(6)-dimethyladenosine(1518)/N(6)-dimethyladenosine(1519) in 16S rRNA + 4 S-adenosyl-L-homocysteine + 4 H(+)</text>
        <dbReference type="Rhea" id="RHEA:19609"/>
        <dbReference type="Rhea" id="RHEA-COMP:10232"/>
        <dbReference type="Rhea" id="RHEA-COMP:10233"/>
        <dbReference type="ChEBI" id="CHEBI:15378"/>
        <dbReference type="ChEBI" id="CHEBI:57856"/>
        <dbReference type="ChEBI" id="CHEBI:59789"/>
        <dbReference type="ChEBI" id="CHEBI:74411"/>
        <dbReference type="ChEBI" id="CHEBI:74493"/>
        <dbReference type="EC" id="2.1.1.182"/>
    </reaction>
</comment>
<comment type="subcellular location">
    <subcellularLocation>
        <location evidence="1">Cytoplasm</location>
    </subcellularLocation>
</comment>
<comment type="similarity">
    <text evidence="1">Belongs to the class I-like SAM-binding methyltransferase superfamily. rRNA adenine N(6)-methyltransferase family. RsmA subfamily.</text>
</comment>
<keyword id="KW-0963">Cytoplasm</keyword>
<keyword id="KW-0489">Methyltransferase</keyword>
<keyword id="KW-0694">RNA-binding</keyword>
<keyword id="KW-0698">rRNA processing</keyword>
<keyword id="KW-0949">S-adenosyl-L-methionine</keyword>
<keyword id="KW-0808">Transferase</keyword>
<reference key="1">
    <citation type="journal article" date="2014" name="Stand. Genomic Sci.">
        <title>Complete genome sequence of Anabaena variabilis ATCC 29413.</title>
        <authorList>
            <person name="Thiel T."/>
            <person name="Pratte B.S."/>
            <person name="Zhong J."/>
            <person name="Goodwin L."/>
            <person name="Copeland A."/>
            <person name="Lucas S."/>
            <person name="Han C."/>
            <person name="Pitluck S."/>
            <person name="Land M.L."/>
            <person name="Kyrpides N.C."/>
            <person name="Woyke T."/>
        </authorList>
    </citation>
    <scope>NUCLEOTIDE SEQUENCE [LARGE SCALE GENOMIC DNA]</scope>
    <source>
        <strain>ATCC 29413 / PCC 7937</strain>
    </source>
</reference>
<name>RSMA_TRIV2</name>
<evidence type="ECO:0000255" key="1">
    <source>
        <dbReference type="HAMAP-Rule" id="MF_00607"/>
    </source>
</evidence>
<dbReference type="EC" id="2.1.1.182" evidence="1"/>
<dbReference type="EMBL" id="CP000117">
    <property type="protein sequence ID" value="ABA24483.1"/>
    <property type="molecule type" value="Genomic_DNA"/>
</dbReference>
<dbReference type="SMR" id="Q3M3F3"/>
<dbReference type="STRING" id="240292.Ava_4886"/>
<dbReference type="KEGG" id="ava:Ava_4886"/>
<dbReference type="eggNOG" id="COG0030">
    <property type="taxonomic scope" value="Bacteria"/>
</dbReference>
<dbReference type="HOGENOM" id="CLU_041220_0_1_3"/>
<dbReference type="Proteomes" id="UP000002533">
    <property type="component" value="Chromosome"/>
</dbReference>
<dbReference type="GO" id="GO:0005829">
    <property type="term" value="C:cytosol"/>
    <property type="evidence" value="ECO:0007669"/>
    <property type="project" value="TreeGrafter"/>
</dbReference>
<dbReference type="GO" id="GO:0052908">
    <property type="term" value="F:16S rRNA (adenine(1518)-N(6)/adenine(1519)-N(6))-dimethyltransferase activity"/>
    <property type="evidence" value="ECO:0007669"/>
    <property type="project" value="UniProtKB-EC"/>
</dbReference>
<dbReference type="GO" id="GO:0003723">
    <property type="term" value="F:RNA binding"/>
    <property type="evidence" value="ECO:0007669"/>
    <property type="project" value="UniProtKB-KW"/>
</dbReference>
<dbReference type="CDD" id="cd02440">
    <property type="entry name" value="AdoMet_MTases"/>
    <property type="match status" value="1"/>
</dbReference>
<dbReference type="FunFam" id="1.10.8.100:FF:000001">
    <property type="entry name" value="Ribosomal RNA small subunit methyltransferase A"/>
    <property type="match status" value="1"/>
</dbReference>
<dbReference type="Gene3D" id="1.10.8.100">
    <property type="entry name" value="Ribosomal RNA adenine dimethylase-like, domain 2"/>
    <property type="match status" value="1"/>
</dbReference>
<dbReference type="Gene3D" id="3.40.50.150">
    <property type="entry name" value="Vaccinia Virus protein VP39"/>
    <property type="match status" value="1"/>
</dbReference>
<dbReference type="HAMAP" id="MF_00607">
    <property type="entry name" value="16SrRNA_methyltr_A"/>
    <property type="match status" value="1"/>
</dbReference>
<dbReference type="InterPro" id="IPR001737">
    <property type="entry name" value="KsgA/Erm"/>
</dbReference>
<dbReference type="InterPro" id="IPR023165">
    <property type="entry name" value="rRNA_Ade_diMease-like_C"/>
</dbReference>
<dbReference type="InterPro" id="IPR020596">
    <property type="entry name" value="rRNA_Ade_Mease_Trfase_CS"/>
</dbReference>
<dbReference type="InterPro" id="IPR020598">
    <property type="entry name" value="rRNA_Ade_methylase_Trfase_N"/>
</dbReference>
<dbReference type="InterPro" id="IPR011530">
    <property type="entry name" value="rRNA_adenine_dimethylase"/>
</dbReference>
<dbReference type="InterPro" id="IPR029063">
    <property type="entry name" value="SAM-dependent_MTases_sf"/>
</dbReference>
<dbReference type="NCBIfam" id="TIGR00755">
    <property type="entry name" value="ksgA"/>
    <property type="match status" value="1"/>
</dbReference>
<dbReference type="PANTHER" id="PTHR11727">
    <property type="entry name" value="DIMETHYLADENOSINE TRANSFERASE"/>
    <property type="match status" value="1"/>
</dbReference>
<dbReference type="PANTHER" id="PTHR11727:SF7">
    <property type="entry name" value="DIMETHYLADENOSINE TRANSFERASE-RELATED"/>
    <property type="match status" value="1"/>
</dbReference>
<dbReference type="Pfam" id="PF00398">
    <property type="entry name" value="RrnaAD"/>
    <property type="match status" value="1"/>
</dbReference>
<dbReference type="SMART" id="SM00650">
    <property type="entry name" value="rADc"/>
    <property type="match status" value="1"/>
</dbReference>
<dbReference type="SUPFAM" id="SSF53335">
    <property type="entry name" value="S-adenosyl-L-methionine-dependent methyltransferases"/>
    <property type="match status" value="1"/>
</dbReference>
<dbReference type="PROSITE" id="PS01131">
    <property type="entry name" value="RRNA_A_DIMETH"/>
    <property type="match status" value="1"/>
</dbReference>
<dbReference type="PROSITE" id="PS51689">
    <property type="entry name" value="SAM_RNA_A_N6_MT"/>
    <property type="match status" value="1"/>
</dbReference>
<accession>Q3M3F3</accession>
<proteinExistence type="inferred from homology"/>
<feature type="chain" id="PRO_0000271897" description="Ribosomal RNA small subunit methyltransferase A">
    <location>
        <begin position="1"/>
        <end position="271"/>
    </location>
</feature>
<feature type="binding site" evidence="1">
    <location>
        <position position="11"/>
    </location>
    <ligand>
        <name>S-adenosyl-L-methionine</name>
        <dbReference type="ChEBI" id="CHEBI:59789"/>
    </ligand>
</feature>
<feature type="binding site" evidence="1">
    <location>
        <position position="13"/>
    </location>
    <ligand>
        <name>S-adenosyl-L-methionine</name>
        <dbReference type="ChEBI" id="CHEBI:59789"/>
    </ligand>
</feature>
<feature type="binding site" evidence="1">
    <location>
        <position position="38"/>
    </location>
    <ligand>
        <name>S-adenosyl-L-methionine</name>
        <dbReference type="ChEBI" id="CHEBI:59789"/>
    </ligand>
</feature>
<feature type="binding site" evidence="1">
    <location>
        <position position="59"/>
    </location>
    <ligand>
        <name>S-adenosyl-L-methionine</name>
        <dbReference type="ChEBI" id="CHEBI:59789"/>
    </ligand>
</feature>
<feature type="binding site" evidence="1">
    <location>
        <position position="84"/>
    </location>
    <ligand>
        <name>S-adenosyl-L-methionine</name>
        <dbReference type="ChEBI" id="CHEBI:59789"/>
    </ligand>
</feature>
<feature type="binding site" evidence="1">
    <location>
        <position position="109"/>
    </location>
    <ligand>
        <name>S-adenosyl-L-methionine</name>
        <dbReference type="ChEBI" id="CHEBI:59789"/>
    </ligand>
</feature>
<organism>
    <name type="scientific">Trichormus variabilis (strain ATCC 29413 / PCC 7937)</name>
    <name type="common">Anabaena variabilis</name>
    <dbReference type="NCBI Taxonomy" id="240292"/>
    <lineage>
        <taxon>Bacteria</taxon>
        <taxon>Bacillati</taxon>
        <taxon>Cyanobacteriota</taxon>
        <taxon>Cyanophyceae</taxon>
        <taxon>Nostocales</taxon>
        <taxon>Nostocaceae</taxon>
        <taxon>Trichormus</taxon>
    </lineage>
</organism>
<protein>
    <recommendedName>
        <fullName evidence="1">Ribosomal RNA small subunit methyltransferase A</fullName>
        <ecNumber evidence="1">2.1.1.182</ecNumber>
    </recommendedName>
    <alternativeName>
        <fullName evidence="1">16S rRNA (adenine(1518)-N(6)/adenine(1519)-N(6))-dimethyltransferase</fullName>
    </alternativeName>
    <alternativeName>
        <fullName evidence="1">16S rRNA dimethyladenosine transferase</fullName>
    </alternativeName>
    <alternativeName>
        <fullName evidence="1">16S rRNA dimethylase</fullName>
    </alternativeName>
    <alternativeName>
        <fullName evidence="1">S-adenosylmethionine-6-N', N'-adenosyl(rRNA) dimethyltransferase</fullName>
    </alternativeName>
</protein>
<gene>
    <name evidence="1" type="primary">rsmA</name>
    <name evidence="1" type="synonym">ksgA</name>
    <name type="ordered locus">Ava_4886</name>
</gene>
<sequence>MVRPRRVFAQHWLKSEKALDAIVKAAECSTNDRILEIGPGTGILTRRLLPLVEALLAVEIDRDLCKLLVKQLGQKENFLLLQGDFLTLDLVANLLTFPKFQKPNKVVANIPYNITGPIIEKLLGTIANPNPEPFDSIVLLIQKEVAERLYAKAGSRTFGALSVRVQYLADCEFICDVPAGAFHPPPKVDSAVVRLRPRQIQIPARDPKRLENLVKLGFGAKRKMLRNNLQSVVDRDRLSQLLEQLNINPQARAEDISTQQWVELANLLGVE</sequence>